<organism>
    <name type="scientific">Solanum tuberosum</name>
    <name type="common">Potato</name>
    <dbReference type="NCBI Taxonomy" id="4113"/>
    <lineage>
        <taxon>Eukaryota</taxon>
        <taxon>Viridiplantae</taxon>
        <taxon>Streptophyta</taxon>
        <taxon>Embryophyta</taxon>
        <taxon>Tracheophyta</taxon>
        <taxon>Spermatophyta</taxon>
        <taxon>Magnoliopsida</taxon>
        <taxon>eudicotyledons</taxon>
        <taxon>Gunneridae</taxon>
        <taxon>Pentapetalae</taxon>
        <taxon>asterids</taxon>
        <taxon>lamiids</taxon>
        <taxon>Solanales</taxon>
        <taxon>Solanaceae</taxon>
        <taxon>Solanoideae</taxon>
        <taxon>Solaneae</taxon>
        <taxon>Solanum</taxon>
    </lineage>
</organism>
<feature type="initiator methionine" description="Removed" evidence="3">
    <location>
        <position position="1"/>
    </location>
</feature>
<feature type="chain" id="PRO_0000118586" description="NADH dehydrogenase [ubiquinone] iron-sulfur protein 2">
    <location>
        <begin position="2"/>
        <end position="47" status="greater than"/>
    </location>
</feature>
<feature type="non-terminal residue">
    <location>
        <position position="47"/>
    </location>
</feature>
<proteinExistence type="evidence at protein level"/>
<evidence type="ECO:0000250" key="1"/>
<evidence type="ECO:0000269" key="2">
    <source>
    </source>
</evidence>
<evidence type="ECO:0000269" key="3">
    <source>
    </source>
</evidence>
<evidence type="ECO:0000305" key="4"/>
<gene>
    <name type="primary">NAD7</name>
</gene>
<reference key="1">
    <citation type="journal article" date="1994" name="Mol. Gen. Genet.">
        <title>The 42.5 kDa subunit of the NADH: ubiquinone oxidoreductase (complex I) in higher plants is encoded by the mitochondrial nad7 gene.</title>
        <authorList>
            <person name="Gabler L."/>
            <person name="Herz U."/>
            <person name="Liddell A."/>
            <person name="Leaver C.J."/>
            <person name="Schroeder W."/>
            <person name="Brennicke A."/>
            <person name="Grohmann L."/>
        </authorList>
    </citation>
    <scope>NUCLEOTIDE SEQUENCE [GENOMIC DNA]</scope>
    <scope>RNA EDITING</scope>
    <source>
        <tissue>Tuber</tissue>
    </source>
</reference>
<reference key="2">
    <citation type="journal article" date="1994" name="J. Biol. Chem.">
        <title>Purification of the NADH:ubiquinone oxidoreductase (complex I) of the respiratory chain from the inner mitochondrial membrane of Solanum tuberosum.</title>
        <authorList>
            <person name="Herz U."/>
            <person name="Schroeder W."/>
            <person name="Liddell A."/>
            <person name="Leaver C.J."/>
            <person name="Brennicke A."/>
            <person name="Grohmann L."/>
        </authorList>
    </citation>
    <scope>PROTEIN SEQUENCE OF 2-37</scope>
    <source>
        <strain>cv. Bintje</strain>
        <tissue>Tuber</tissue>
    </source>
</reference>
<name>NDUS2_SOLTU</name>
<sequence length="47" mass="5278">MTTKNRQIQNFTLNFGPQHPAAHGVLRLVLEMNGEVVERAEPHIGLL</sequence>
<keyword id="KW-0903">Direct protein sequencing</keyword>
<keyword id="KW-0249">Electron transport</keyword>
<keyword id="KW-0472">Membrane</keyword>
<keyword id="KW-0496">Mitochondrion</keyword>
<keyword id="KW-0999">Mitochondrion inner membrane</keyword>
<keyword id="KW-0520">NAD</keyword>
<keyword id="KW-0560">Oxidoreductase</keyword>
<keyword id="KW-1185">Reference proteome</keyword>
<keyword id="KW-0679">Respiratory chain</keyword>
<keyword id="KW-0691">RNA editing</keyword>
<keyword id="KW-1278">Translocase</keyword>
<keyword id="KW-0813">Transport</keyword>
<keyword id="KW-0830">Ubiquinone</keyword>
<dbReference type="EC" id="7.1.1.2"/>
<dbReference type="EMBL" id="X75579">
    <property type="protein sequence ID" value="CAA53256.1"/>
    <property type="status" value="ALT_SEQ"/>
    <property type="molecule type" value="Genomic_DNA"/>
</dbReference>
<dbReference type="PIR" id="S46439">
    <property type="entry name" value="S38586"/>
</dbReference>
<dbReference type="SMR" id="P80264"/>
<dbReference type="STRING" id="4113.P80264"/>
<dbReference type="PaxDb" id="4113-PGSC0003DMT400034339"/>
<dbReference type="eggNOG" id="KOG2870">
    <property type="taxonomic scope" value="Eukaryota"/>
</dbReference>
<dbReference type="InParanoid" id="P80264"/>
<dbReference type="Proteomes" id="UP000011115">
    <property type="component" value="Unassembled WGS sequence"/>
</dbReference>
<dbReference type="ExpressionAtlas" id="P80264">
    <property type="expression patterns" value="baseline"/>
</dbReference>
<dbReference type="GO" id="GO:0005743">
    <property type="term" value="C:mitochondrial inner membrane"/>
    <property type="evidence" value="ECO:0007669"/>
    <property type="project" value="UniProtKB-SubCell"/>
</dbReference>
<dbReference type="GO" id="GO:0008137">
    <property type="term" value="F:NADH dehydrogenase (ubiquinone) activity"/>
    <property type="evidence" value="ECO:0007669"/>
    <property type="project" value="UniProtKB-EC"/>
</dbReference>
<dbReference type="Gene3D" id="1.10.645.10">
    <property type="entry name" value="Cytochrome-c3 Hydrogenase, chain B"/>
    <property type="match status" value="1"/>
</dbReference>
<dbReference type="InterPro" id="IPR022885">
    <property type="entry name" value="NDH1_su_D/H"/>
</dbReference>
<dbReference type="InterPro" id="IPR029014">
    <property type="entry name" value="NiFe-Hase_large"/>
</dbReference>
<dbReference type="PANTHER" id="PTHR11993:SF10">
    <property type="entry name" value="NADH DEHYDROGENASE [UBIQUINONE] IRON-SULFUR PROTEIN 2, MITOCHONDRIAL"/>
    <property type="match status" value="1"/>
</dbReference>
<dbReference type="PANTHER" id="PTHR11993">
    <property type="entry name" value="NADH-UBIQUINONE OXIDOREDUCTASE 49 KDA SUBUNIT"/>
    <property type="match status" value="1"/>
</dbReference>
<dbReference type="SUPFAM" id="SSF56762">
    <property type="entry name" value="HydB/Nqo4-like"/>
    <property type="match status" value="1"/>
</dbReference>
<protein>
    <recommendedName>
        <fullName>NADH dehydrogenase [ubiquinone] iron-sulfur protein 2</fullName>
        <ecNumber>7.1.1.2</ecNumber>
    </recommendedName>
    <alternativeName>
        <fullName>Complex I-42.5kD</fullName>
        <shortName>CI-42.5kD</shortName>
    </alternativeName>
    <alternativeName>
        <fullName>NADH dehydrogenase subunit 7</fullName>
    </alternativeName>
    <alternativeName>
        <fullName>NADH-ubiquinone oxidoreductase 42.5 kDa subunit</fullName>
    </alternativeName>
</protein>
<geneLocation type="mitochondrion"/>
<comment type="function">
    <text evidence="1">Core subunit of the mitochondrial membrane respiratory chain NADH dehydrogenase (Complex I) that is believed to belong to the minimal assembly required for catalysis. Complex I functions in the transfer of electrons from NADH to the respiratory chain. The immediate electron acceptor for the enzyme is believed to be ubiquinone (By similarity). Component of the iron-sulfur (IP) fragment of the enzyme.</text>
</comment>
<comment type="catalytic activity">
    <reaction>
        <text>a ubiquinone + NADH + 5 H(+)(in) = a ubiquinol + NAD(+) + 4 H(+)(out)</text>
        <dbReference type="Rhea" id="RHEA:29091"/>
        <dbReference type="Rhea" id="RHEA-COMP:9565"/>
        <dbReference type="Rhea" id="RHEA-COMP:9566"/>
        <dbReference type="ChEBI" id="CHEBI:15378"/>
        <dbReference type="ChEBI" id="CHEBI:16389"/>
        <dbReference type="ChEBI" id="CHEBI:17976"/>
        <dbReference type="ChEBI" id="CHEBI:57540"/>
        <dbReference type="ChEBI" id="CHEBI:57945"/>
        <dbReference type="EC" id="7.1.1.2"/>
    </reaction>
</comment>
<comment type="subunit">
    <text evidence="1">Complex I is composed of about 45 different subunits. This is a component of the iron-sulfur (IP) fragment of the enzyme (By similarity).</text>
</comment>
<comment type="subcellular location">
    <subcellularLocation>
        <location>Mitochondrion inner membrane</location>
        <topology>Peripheral membrane protein</topology>
        <orientation>Matrix side</orientation>
    </subcellularLocation>
</comment>
<comment type="RNA editing">
    <location>
        <position position="13" evidence="2"/>
    </location>
    <location>
        <position position="26" evidence="2"/>
    </location>
    <location>
        <position position="28" evidence="2"/>
    </location>
</comment>
<comment type="similarity">
    <text evidence="4">Belongs to the complex I 49 kDa subunit family.</text>
</comment>
<accession>P80264</accession>
<accession>Q43185</accession>